<protein>
    <recommendedName>
        <fullName>Kelch-like protein 3</fullName>
    </recommendedName>
</protein>
<feature type="chain" id="PRO_0000417530" description="Kelch-like protein 3">
    <location>
        <begin position="1"/>
        <end position="587"/>
    </location>
</feature>
<feature type="domain" description="BTB" evidence="3">
    <location>
        <begin position="50"/>
        <end position="117"/>
    </location>
</feature>
<feature type="domain" description="BACK">
    <location>
        <begin position="152"/>
        <end position="254"/>
    </location>
</feature>
<feature type="repeat" description="Kelch 1">
    <location>
        <begin position="302"/>
        <end position="347"/>
    </location>
</feature>
<feature type="repeat" description="Kelch 2">
    <location>
        <begin position="348"/>
        <end position="394"/>
    </location>
</feature>
<feature type="repeat" description="Kelch 3">
    <location>
        <begin position="396"/>
        <end position="441"/>
    </location>
</feature>
<feature type="repeat" description="Kelch 4">
    <location>
        <begin position="442"/>
        <end position="490"/>
    </location>
</feature>
<feature type="repeat" description="Kelch 5">
    <location>
        <begin position="491"/>
        <end position="537"/>
    </location>
</feature>
<feature type="repeat" description="Kelch 6">
    <location>
        <begin position="539"/>
        <end position="585"/>
    </location>
</feature>
<feature type="region of interest" description="Disordered" evidence="4">
    <location>
        <begin position="1"/>
        <end position="22"/>
    </location>
</feature>
<feature type="modified residue" description="Phosphoserine" evidence="2">
    <location>
        <position position="10"/>
    </location>
</feature>
<feature type="modified residue" description="Phosphothreonine" evidence="2">
    <location>
        <position position="295"/>
    </location>
</feature>
<feature type="modified residue" description="Phosphothreonine" evidence="2">
    <location>
        <position position="375"/>
    </location>
</feature>
<feature type="modified residue" description="Phosphoserine" evidence="2">
    <location>
        <position position="376"/>
    </location>
</feature>
<feature type="modified residue" description="Phosphoserine" evidence="2">
    <location>
        <position position="433"/>
    </location>
</feature>
<sequence length="587" mass="64978">MDGESIKPSSQPLIQTGDDEKNQRTITVNPAHMGKAFKVMNELRSKQLLCDVMIVAEDVEIEAHRVVLAACSPYFCAMFTGDMSESKAKKIEIKDVDGQTLSKLIDYIYTAEIEVTEENVQVLLPAASLLQLMDVRQNCCDFLQSQLHPTNCLGIRAFADVHTCTDLLQQANAYAEQHFPEVMLGEEFLSLSLDQVCSLISSDKLTVSSEEKVFEAVISWINYEKETRLEHMAKLMEHVRLPLLPRDYLVQTVEEEALIKNNNTCKDFLIEAMKYHLLPLDQRLLIKNPRTKPRTPVSLPKVMIVVGGQAPKAIRSVECYDFEEDRWDQIAELPSRRCRAGVVFMAGHVYAVGGFNGSLRVRTVDVYDGVKDQWTSIASMQERRSTLGAAVLNDLLYAVGGFDGSTGLASVEAYSYKTNEWFFVAPMNTRRSSVGVGVVEGKLYAVGGYDGASRQCLSTVEQYNPATNEWTYVADMSTRRSGAGVGVLSGQLYATGGHDGPLVRKSVEVYDPGTNTWKQVADMNMCRRNAGVCAVNGLLYVVGGDDGSCNLASVEYYNPVTDKWTLLPTNMSTGRSYAGVAVIHKPL</sequence>
<keyword id="KW-0009">Actin-binding</keyword>
<keyword id="KW-0963">Cytoplasm</keyword>
<keyword id="KW-0206">Cytoskeleton</keyword>
<keyword id="KW-0880">Kelch repeat</keyword>
<keyword id="KW-0597">Phosphoprotein</keyword>
<keyword id="KW-1185">Reference proteome</keyword>
<keyword id="KW-0677">Repeat</keyword>
<keyword id="KW-0833">Ubl conjugation pathway</keyword>
<gene>
    <name type="primary">KLHL3</name>
</gene>
<accession>F1MBP6</accession>
<name>KLHL3_BOVIN</name>
<dbReference type="EMBL" id="DAAA02020380">
    <property type="status" value="NOT_ANNOTATED_CDS"/>
    <property type="molecule type" value="Genomic_DNA"/>
</dbReference>
<dbReference type="EMBL" id="DAAA02020381">
    <property type="status" value="NOT_ANNOTATED_CDS"/>
    <property type="molecule type" value="Genomic_DNA"/>
</dbReference>
<dbReference type="EMBL" id="DAAA02020382">
    <property type="status" value="NOT_ANNOTATED_CDS"/>
    <property type="molecule type" value="Genomic_DNA"/>
</dbReference>
<dbReference type="RefSeq" id="XP_002689253.2">
    <property type="nucleotide sequence ID" value="XM_002689207.7"/>
</dbReference>
<dbReference type="RefSeq" id="XP_612749.5">
    <property type="nucleotide sequence ID" value="XM_612749.8"/>
</dbReference>
<dbReference type="SMR" id="F1MBP6"/>
<dbReference type="FunCoup" id="F1MBP6">
    <property type="interactions" value="799"/>
</dbReference>
<dbReference type="STRING" id="9913.ENSBTAP00000003625"/>
<dbReference type="PaxDb" id="9913-ENSBTAP00000003625"/>
<dbReference type="GeneID" id="533364"/>
<dbReference type="KEGG" id="bta:533364"/>
<dbReference type="CTD" id="26249"/>
<dbReference type="VEuPathDB" id="HostDB:ENSBTAG00000002796"/>
<dbReference type="eggNOG" id="KOG4441">
    <property type="taxonomic scope" value="Eukaryota"/>
</dbReference>
<dbReference type="InParanoid" id="F1MBP6"/>
<dbReference type="OMA" id="EVPAHKN"/>
<dbReference type="OrthoDB" id="45365at2759"/>
<dbReference type="Reactome" id="R-BTA-8951664">
    <property type="pathway name" value="Neddylation"/>
</dbReference>
<dbReference type="Reactome" id="R-BTA-983168">
    <property type="pathway name" value="Antigen processing: Ubiquitination &amp; Proteasome degradation"/>
</dbReference>
<dbReference type="UniPathway" id="UPA00143"/>
<dbReference type="Proteomes" id="UP000009136">
    <property type="component" value="Chromosome 7"/>
</dbReference>
<dbReference type="Bgee" id="ENSBTAG00000002796">
    <property type="expression patterns" value="Expressed in adult mammalian kidney and 94 other cell types or tissues"/>
</dbReference>
<dbReference type="GO" id="GO:0031463">
    <property type="term" value="C:Cul3-RING ubiquitin ligase complex"/>
    <property type="evidence" value="ECO:0000250"/>
    <property type="project" value="UniProtKB"/>
</dbReference>
<dbReference type="GO" id="GO:0005737">
    <property type="term" value="C:cytoplasm"/>
    <property type="evidence" value="ECO:0000318"/>
    <property type="project" value="GO_Central"/>
</dbReference>
<dbReference type="GO" id="GO:0005856">
    <property type="term" value="C:cytoskeleton"/>
    <property type="evidence" value="ECO:0007669"/>
    <property type="project" value="UniProtKB-SubCell"/>
</dbReference>
<dbReference type="GO" id="GO:0005829">
    <property type="term" value="C:cytosol"/>
    <property type="evidence" value="ECO:0000250"/>
    <property type="project" value="UniProtKB"/>
</dbReference>
<dbReference type="GO" id="GO:0003779">
    <property type="term" value="F:actin binding"/>
    <property type="evidence" value="ECO:0007669"/>
    <property type="project" value="UniProtKB-KW"/>
</dbReference>
<dbReference type="GO" id="GO:1990756">
    <property type="term" value="F:ubiquitin-like ligase-substrate adaptor activity"/>
    <property type="evidence" value="ECO:0000250"/>
    <property type="project" value="UniProtKB"/>
</dbReference>
<dbReference type="GO" id="GO:0072156">
    <property type="term" value="P:distal tubule morphogenesis"/>
    <property type="evidence" value="ECO:0000250"/>
    <property type="project" value="UniProtKB"/>
</dbReference>
<dbReference type="GO" id="GO:0050801">
    <property type="term" value="P:monoatomic ion homeostasis"/>
    <property type="evidence" value="ECO:0000250"/>
    <property type="project" value="UniProtKB"/>
</dbReference>
<dbReference type="GO" id="GO:0043161">
    <property type="term" value="P:proteasome-mediated ubiquitin-dependent protein catabolic process"/>
    <property type="evidence" value="ECO:0000318"/>
    <property type="project" value="GO_Central"/>
</dbReference>
<dbReference type="GO" id="GO:0070936">
    <property type="term" value="P:protein K48-linked ubiquitination"/>
    <property type="evidence" value="ECO:0000250"/>
    <property type="project" value="UniProtKB"/>
</dbReference>
<dbReference type="GO" id="GO:0016567">
    <property type="term" value="P:protein ubiquitination"/>
    <property type="evidence" value="ECO:0000250"/>
    <property type="project" value="UniProtKB"/>
</dbReference>
<dbReference type="GO" id="GO:0070294">
    <property type="term" value="P:renal sodium ion absorption"/>
    <property type="evidence" value="ECO:0000250"/>
    <property type="project" value="UniProtKB"/>
</dbReference>
<dbReference type="GO" id="GO:0006511">
    <property type="term" value="P:ubiquitin-dependent protein catabolic process"/>
    <property type="evidence" value="ECO:0000250"/>
    <property type="project" value="UniProtKB"/>
</dbReference>
<dbReference type="CDD" id="cd18513">
    <property type="entry name" value="BACK_KLHL3"/>
    <property type="match status" value="1"/>
</dbReference>
<dbReference type="CDD" id="cd18339">
    <property type="entry name" value="BTB_POZ_KLHL3"/>
    <property type="match status" value="1"/>
</dbReference>
<dbReference type="FunFam" id="1.25.40.420:FF:000001">
    <property type="entry name" value="Kelch-like family member 12"/>
    <property type="match status" value="1"/>
</dbReference>
<dbReference type="FunFam" id="2.120.10.80:FF:000002">
    <property type="entry name" value="Kelch-like family member 2"/>
    <property type="match status" value="1"/>
</dbReference>
<dbReference type="FunFam" id="3.30.710.10:FF:000001">
    <property type="entry name" value="Kelch-like family member 20"/>
    <property type="match status" value="1"/>
</dbReference>
<dbReference type="Gene3D" id="1.25.40.420">
    <property type="match status" value="1"/>
</dbReference>
<dbReference type="Gene3D" id="2.120.10.80">
    <property type="entry name" value="Kelch-type beta propeller"/>
    <property type="match status" value="1"/>
</dbReference>
<dbReference type="Gene3D" id="3.30.710.10">
    <property type="entry name" value="Potassium Channel Kv1.1, Chain A"/>
    <property type="match status" value="1"/>
</dbReference>
<dbReference type="InterPro" id="IPR011705">
    <property type="entry name" value="BACK"/>
</dbReference>
<dbReference type="InterPro" id="IPR017096">
    <property type="entry name" value="BTB-kelch_protein"/>
</dbReference>
<dbReference type="InterPro" id="IPR000210">
    <property type="entry name" value="BTB/POZ_dom"/>
</dbReference>
<dbReference type="InterPro" id="IPR015915">
    <property type="entry name" value="Kelch-typ_b-propeller"/>
</dbReference>
<dbReference type="InterPro" id="IPR006652">
    <property type="entry name" value="Kelch_1"/>
</dbReference>
<dbReference type="InterPro" id="IPR030578">
    <property type="entry name" value="KLHL3_BACK"/>
</dbReference>
<dbReference type="InterPro" id="IPR011333">
    <property type="entry name" value="SKP1/BTB/POZ_sf"/>
</dbReference>
<dbReference type="PANTHER" id="PTHR24412">
    <property type="entry name" value="KELCH PROTEIN"/>
    <property type="match status" value="1"/>
</dbReference>
<dbReference type="PANTHER" id="PTHR24412:SF179">
    <property type="entry name" value="KELCH-LIKE PROTEIN 3"/>
    <property type="match status" value="1"/>
</dbReference>
<dbReference type="Pfam" id="PF07707">
    <property type="entry name" value="BACK"/>
    <property type="match status" value="1"/>
</dbReference>
<dbReference type="Pfam" id="PF00651">
    <property type="entry name" value="BTB"/>
    <property type="match status" value="1"/>
</dbReference>
<dbReference type="Pfam" id="PF01344">
    <property type="entry name" value="Kelch_1"/>
    <property type="match status" value="6"/>
</dbReference>
<dbReference type="PIRSF" id="PIRSF037037">
    <property type="entry name" value="Kelch-like_protein_gigaxonin"/>
    <property type="match status" value="1"/>
</dbReference>
<dbReference type="PRINTS" id="PR00501">
    <property type="entry name" value="KELCHREPEAT"/>
</dbReference>
<dbReference type="SMART" id="SM00875">
    <property type="entry name" value="BACK"/>
    <property type="match status" value="1"/>
</dbReference>
<dbReference type="SMART" id="SM00225">
    <property type="entry name" value="BTB"/>
    <property type="match status" value="1"/>
</dbReference>
<dbReference type="SMART" id="SM00612">
    <property type="entry name" value="Kelch"/>
    <property type="match status" value="6"/>
</dbReference>
<dbReference type="SUPFAM" id="SSF117281">
    <property type="entry name" value="Kelch motif"/>
    <property type="match status" value="1"/>
</dbReference>
<dbReference type="SUPFAM" id="SSF54695">
    <property type="entry name" value="POZ domain"/>
    <property type="match status" value="1"/>
</dbReference>
<dbReference type="PROSITE" id="PS50097">
    <property type="entry name" value="BTB"/>
    <property type="match status" value="1"/>
</dbReference>
<evidence type="ECO:0000250" key="1">
    <source>
        <dbReference type="UniProtKB" id="E0CZ16"/>
    </source>
</evidence>
<evidence type="ECO:0000250" key="2">
    <source>
        <dbReference type="UniProtKB" id="Q9UH77"/>
    </source>
</evidence>
<evidence type="ECO:0000255" key="3">
    <source>
        <dbReference type="PROSITE-ProRule" id="PRU00037"/>
    </source>
</evidence>
<evidence type="ECO:0000256" key="4">
    <source>
        <dbReference type="SAM" id="MobiDB-lite"/>
    </source>
</evidence>
<evidence type="ECO:0000305" key="5"/>
<reference key="1">
    <citation type="journal article" date="2009" name="Genome Biol.">
        <title>A whole-genome assembly of the domestic cow, Bos taurus.</title>
        <authorList>
            <person name="Zimin A.V."/>
            <person name="Delcher A.L."/>
            <person name="Florea L."/>
            <person name="Kelley D.R."/>
            <person name="Schatz M.C."/>
            <person name="Puiu D."/>
            <person name="Hanrahan F."/>
            <person name="Pertea G."/>
            <person name="Van Tassell C.P."/>
            <person name="Sonstegard T.S."/>
            <person name="Marcais G."/>
            <person name="Roberts M."/>
            <person name="Subramanian P."/>
            <person name="Yorke J.A."/>
            <person name="Salzberg S.L."/>
        </authorList>
    </citation>
    <scope>NUCLEOTIDE SEQUENCE [LARGE SCALE GENOMIC DNA]</scope>
    <source>
        <strain>Hereford</strain>
    </source>
</reference>
<comment type="function">
    <text evidence="1 2">Substrate-specific adapter of a BCR (BTB-CUL3-RBX1) E3 ubiquitin ligase complex that acts as a regulator of ion transport in the distal nephron. The BCR(KLHL3) complex acts by mediating ubiquitination and degradation of WNK1 and WNK4, two activators of Na-Cl cotransporter SLC12A3/NCC in distal convoluted tubule cells of kidney, thereby regulating NaCl reabsorption. The BCR(KLHL3) complex also mediates ubiquitination and degradation of WNK3 (By similarity). The BCR(KLHL3) complex also mediates ubiquitination of CLDN8, a tight-junction protein required for paracellular chloride transport in the kidney, leading to its degradation (By similarity).</text>
</comment>
<comment type="pathway">
    <text evidence="2">Protein modification; protein ubiquitination.</text>
</comment>
<comment type="subunit">
    <text evidence="1 2">Homodimer. Component of the BCR(KLHL3) E3 ubiquitin ligase complex, at least composed of CUL3 and KLHL3 and RBX1 (By similarity). Interacts with CLDN8 (By similarity).</text>
</comment>
<comment type="subcellular location">
    <subcellularLocation>
        <location evidence="2">Cytoplasm</location>
        <location evidence="2">Cytoskeleton</location>
    </subcellularLocation>
    <subcellularLocation>
        <location evidence="2">Cytoplasm</location>
        <location evidence="2">Cytosol</location>
    </subcellularLocation>
</comment>
<comment type="PTM">
    <text evidence="2">Phosphorylation at Ser-433 by PKA or PKC decreases the interaction with WNK1 and WNK4, leading to inhibit their degradation by the BCR(KLHL3) complex. Phosphorylated at Ser-433 by PKC in response to angiotensin II signaling, decreasing ability to promote degradation of WNK1 and WNK4, leading to activation of Na-Cl cotransporter SLC12A3/NCC. Phosphorylation at Ser-433 is increased by insulin. Dephosphorylated at Ser-433 by calcineurin PPP3CA, promoting degradation of WNK1 and WNK4.</text>
</comment>
<comment type="similarity">
    <text evidence="5">Belongs to the KLHL3 family.</text>
</comment>
<proteinExistence type="inferred from homology"/>
<organism>
    <name type="scientific">Bos taurus</name>
    <name type="common">Bovine</name>
    <dbReference type="NCBI Taxonomy" id="9913"/>
    <lineage>
        <taxon>Eukaryota</taxon>
        <taxon>Metazoa</taxon>
        <taxon>Chordata</taxon>
        <taxon>Craniata</taxon>
        <taxon>Vertebrata</taxon>
        <taxon>Euteleostomi</taxon>
        <taxon>Mammalia</taxon>
        <taxon>Eutheria</taxon>
        <taxon>Laurasiatheria</taxon>
        <taxon>Artiodactyla</taxon>
        <taxon>Ruminantia</taxon>
        <taxon>Pecora</taxon>
        <taxon>Bovidae</taxon>
        <taxon>Bovinae</taxon>
        <taxon>Bos</taxon>
    </lineage>
</organism>